<protein>
    <recommendedName>
        <fullName evidence="11 13">DNA-damage-repair/toleration protein 111</fullName>
    </recommendedName>
    <alternativeName>
        <fullName evidence="10 11 12">Protein SPLICING FACTOR FOR PHYTOCHROME SIGNALING</fullName>
    </alternativeName>
    <alternativeName>
        <fullName evidence="9">REQUIRED FOR SNC4-1D protein 2</fullName>
    </alternativeName>
</protein>
<organism>
    <name type="scientific">Arabidopsis thaliana</name>
    <name type="common">Mouse-ear cress</name>
    <dbReference type="NCBI Taxonomy" id="3702"/>
    <lineage>
        <taxon>Eukaryota</taxon>
        <taxon>Viridiplantae</taxon>
        <taxon>Streptophyta</taxon>
        <taxon>Embryophyta</taxon>
        <taxon>Tracheophyta</taxon>
        <taxon>Spermatophyta</taxon>
        <taxon>Magnoliopsida</taxon>
        <taxon>eudicotyledons</taxon>
        <taxon>Gunneridae</taxon>
        <taxon>Pentapetalae</taxon>
        <taxon>rosids</taxon>
        <taxon>malvids</taxon>
        <taxon>Brassicales</taxon>
        <taxon>Brassicaceae</taxon>
        <taxon>Camelineae</taxon>
        <taxon>Arabidopsis</taxon>
    </lineage>
</organism>
<comment type="function">
    <text evidence="4 5 6 7 8">As a member of the SWAP1-SFPS-RRC1 splicing factor complex, modulates photomorphogenesis by regulating the gene expression and pre-messenger RNA (mRNA) alternative splicing of a large number of genes, including those involved in plant responses to light signaling, probably by helping in the 3' splice site determination (PubMed:25267732, PubMed:28760995, PubMed:32123040, PubMed:36282917). Associates with and regulates EARLY FLOWERING 3 (ELF3) mRNA processing, a key component of the circadian clock also involved in photomorphogenesis (PubMed:28760995). Required for light-regulated (red, far-red and blue lights) photomorphogenesis in a PHYB- and PHYTOCHROME INTERACTING FACTORS- (PIFs) dependent manner (PubMed:28760995). Promotes flowering under both short (SD) and long days (LD) (PubMed:28760995). Controls abscisic acid (ABA) sensitivity during seed development, stomatal responsiveness and germination by monitoring ABI3 splicing, upstream of the splicing factor SUPPRESSOR OF ABI3-ABI5 (PubMed:32123040). Seems to be involved in the resistance to UV light and chemical DNA-damaging agents (PubMed:8479917).</text>
</comment>
<comment type="subunit">
    <text evidence="5 6 7">Component of the SWAP1-SFPS-RRC1 splicing factor complex which modulates pre-mRNA splicing to promote photomorphogenesis (PubMed:36282917). Interacts with SWAP1 in a light-independent manner (PubMed:36282917). Associates with the photoreceptor phytochrome B (phyB) in nuclear photobodies upon response to red light (PubMed:28760995). Binds to the splicing factor 1 SF1, involved in 3' splicing site recognition (PubMed:32123040).</text>
</comment>
<comment type="subcellular location">
    <subcellularLocation>
        <location evidence="5">Nucleus</location>
    </subcellularLocation>
    <subcellularLocation>
        <location evidence="5 6 7">Nucleus speckle</location>
    </subcellularLocation>
    <text evidence="5 6">Observed in subnuclear light-induced structures called photobodies in response to light (PubMed:28760995). Colocalizes in nuclear speckles with U2 small nuclear ribonucleoprotein-associated factors including U2AF65B, U2A' and U2AF35A and with SF1 (PubMed:28760995, PubMed:32123040).</text>
</comment>
<comment type="tissue specificity">
    <text evidence="6">Expressed ubiquitously with highest levels in dry seeds and in cells surrounding the base of trichomes and guard cells.</text>
</comment>
<comment type="induction">
    <text evidence="6">Induced by osmotic stress such as long-term treatments of polyethylene glycol, salt (NaCl) and abscisic acid (ABA).</text>
</comment>
<comment type="disruption phenotype">
    <text evidence="5 6 7">Reduced sensitivity to red, far-red and blue lights associated with precocious flowering (in both short and long days), lower chlorophyll and anthocyanin levels and reduced cotyledon opening; these phenotypes are related to defects in gene expression and pre-mRNA splicing (PubMed:28760995, PubMed:36282917). Defective in abscisic acid (ABA)-induced stomatal closure and hypersensitivity to ABA during seed germination (PubMed:32123040). Plants lacking SWAP1, RRC1 and DRT111/RSN2/SFPS have pleiotropic phenotypes due to altered alternative splicing of many pre-messenger RNA (mRNA) (PubMed:36282917).</text>
</comment>
<accession>P42698</accession>
<accession>Q9S9Q1</accession>
<keyword id="KW-0938">Abscisic acid signaling pathway</keyword>
<keyword id="KW-0227">DNA damage</keyword>
<keyword id="KW-0234">DNA repair</keyword>
<keyword id="KW-0507">mRNA processing</keyword>
<keyword id="KW-0508">mRNA splicing</keyword>
<keyword id="KW-0539">Nucleus</keyword>
<keyword id="KW-1185">Reference proteome</keyword>
<keyword id="KW-0694">RNA-binding</keyword>
<keyword id="KW-0346">Stress response</keyword>
<proteinExistence type="evidence at protein level"/>
<gene>
    <name evidence="11 16" type="primary">DRT111</name>
    <name evidence="9" type="synonym">RSN2</name>
    <name evidence="10 11 12" type="synonym">SFPS</name>
    <name evidence="15" type="ordered locus">At1g30480</name>
    <name evidence="17" type="ORF">F26G16.10</name>
</gene>
<evidence type="ECO:0000255" key="1">
    <source>
        <dbReference type="PROSITE-ProRule" id="PRU00092"/>
    </source>
</evidence>
<evidence type="ECO:0000255" key="2">
    <source>
        <dbReference type="PROSITE-ProRule" id="PRU00176"/>
    </source>
</evidence>
<evidence type="ECO:0000256" key="3">
    <source>
        <dbReference type="SAM" id="MobiDB-lite"/>
    </source>
</evidence>
<evidence type="ECO:0000269" key="4">
    <source>
    </source>
</evidence>
<evidence type="ECO:0000269" key="5">
    <source>
    </source>
</evidence>
<evidence type="ECO:0000269" key="6">
    <source>
    </source>
</evidence>
<evidence type="ECO:0000269" key="7">
    <source>
    </source>
</evidence>
<evidence type="ECO:0000269" key="8">
    <source>
    </source>
</evidence>
<evidence type="ECO:0000303" key="9">
    <source>
    </source>
</evidence>
<evidence type="ECO:0000303" key="10">
    <source>
    </source>
</evidence>
<evidence type="ECO:0000303" key="11">
    <source>
    </source>
</evidence>
<evidence type="ECO:0000303" key="12">
    <source>
    </source>
</evidence>
<evidence type="ECO:0000303" key="13">
    <source>
    </source>
</evidence>
<evidence type="ECO:0000305" key="14"/>
<evidence type="ECO:0000312" key="15">
    <source>
        <dbReference type="Araport" id="AT1G30480"/>
    </source>
</evidence>
<evidence type="ECO:0000312" key="16">
    <source>
        <dbReference type="EMBL" id="AAA73382.1"/>
    </source>
</evidence>
<evidence type="ECO:0000312" key="17">
    <source>
        <dbReference type="EMBL" id="AAF19751.1"/>
    </source>
</evidence>
<reference key="1">
    <citation type="journal article" date="1993" name="Nucleic Acids Res.">
        <title>Two cDNAs from the plant Arabidopsis thaliana that partially restore recombination proficiency and DNA-damage resistance to E. coli mutants lacking recombination-intermediate-resolution activities.</title>
        <authorList>
            <person name="Pang Q."/>
            <person name="Hays J.B."/>
            <person name="Rajagopal I."/>
        </authorList>
    </citation>
    <scope>NUCLEOTIDE SEQUENCE [MRNA]</scope>
    <scope>FUNCTION</scope>
    <source>
        <strain>cv. Columbia</strain>
    </source>
</reference>
<reference key="2">
    <citation type="journal article" date="2000" name="Nature">
        <title>Sequence and analysis of chromosome 1 of the plant Arabidopsis thaliana.</title>
        <authorList>
            <person name="Theologis A."/>
            <person name="Ecker J.R."/>
            <person name="Palm C.J."/>
            <person name="Federspiel N.A."/>
            <person name="Kaul S."/>
            <person name="White O."/>
            <person name="Alonso J."/>
            <person name="Altafi H."/>
            <person name="Araujo R."/>
            <person name="Bowman C.L."/>
            <person name="Brooks S.Y."/>
            <person name="Buehler E."/>
            <person name="Chan A."/>
            <person name="Chao Q."/>
            <person name="Chen H."/>
            <person name="Cheuk R.F."/>
            <person name="Chin C.W."/>
            <person name="Chung M.K."/>
            <person name="Conn L."/>
            <person name="Conway A.B."/>
            <person name="Conway A.R."/>
            <person name="Creasy T.H."/>
            <person name="Dewar K."/>
            <person name="Dunn P."/>
            <person name="Etgu P."/>
            <person name="Feldblyum T.V."/>
            <person name="Feng J.-D."/>
            <person name="Fong B."/>
            <person name="Fujii C.Y."/>
            <person name="Gill J.E."/>
            <person name="Goldsmith A.D."/>
            <person name="Haas B."/>
            <person name="Hansen N.F."/>
            <person name="Hughes B."/>
            <person name="Huizar L."/>
            <person name="Hunter J.L."/>
            <person name="Jenkins J."/>
            <person name="Johnson-Hopson C."/>
            <person name="Khan S."/>
            <person name="Khaykin E."/>
            <person name="Kim C.J."/>
            <person name="Koo H.L."/>
            <person name="Kremenetskaia I."/>
            <person name="Kurtz D.B."/>
            <person name="Kwan A."/>
            <person name="Lam B."/>
            <person name="Langin-Hooper S."/>
            <person name="Lee A."/>
            <person name="Lee J.M."/>
            <person name="Lenz C.A."/>
            <person name="Li J.H."/>
            <person name="Li Y.-P."/>
            <person name="Lin X."/>
            <person name="Liu S.X."/>
            <person name="Liu Z.A."/>
            <person name="Luros J.S."/>
            <person name="Maiti R."/>
            <person name="Marziali A."/>
            <person name="Militscher J."/>
            <person name="Miranda M."/>
            <person name="Nguyen M."/>
            <person name="Nierman W.C."/>
            <person name="Osborne B.I."/>
            <person name="Pai G."/>
            <person name="Peterson J."/>
            <person name="Pham P.K."/>
            <person name="Rizzo M."/>
            <person name="Rooney T."/>
            <person name="Rowley D."/>
            <person name="Sakano H."/>
            <person name="Salzberg S.L."/>
            <person name="Schwartz J.R."/>
            <person name="Shinn P."/>
            <person name="Southwick A.M."/>
            <person name="Sun H."/>
            <person name="Tallon L.J."/>
            <person name="Tambunga G."/>
            <person name="Toriumi M.J."/>
            <person name="Town C.D."/>
            <person name="Utterback T."/>
            <person name="Van Aken S."/>
            <person name="Vaysberg M."/>
            <person name="Vysotskaia V.S."/>
            <person name="Walker M."/>
            <person name="Wu D."/>
            <person name="Yu G."/>
            <person name="Fraser C.M."/>
            <person name="Venter J.C."/>
            <person name="Davis R.W."/>
        </authorList>
    </citation>
    <scope>NUCLEOTIDE SEQUENCE [LARGE SCALE GENOMIC DNA]</scope>
    <source>
        <strain>cv. Columbia</strain>
    </source>
</reference>
<reference key="3">
    <citation type="journal article" date="2017" name="Plant J.">
        <title>Araport11: a complete reannotation of the Arabidopsis thaliana reference genome.</title>
        <authorList>
            <person name="Cheng C.Y."/>
            <person name="Krishnakumar V."/>
            <person name="Chan A.P."/>
            <person name="Thibaud-Nissen F."/>
            <person name="Schobel S."/>
            <person name="Town C.D."/>
        </authorList>
    </citation>
    <scope>GENOME REANNOTATION</scope>
    <source>
        <strain>cv. Columbia</strain>
    </source>
</reference>
<reference key="4">
    <citation type="journal article" date="2003" name="Science">
        <title>Empirical analysis of transcriptional activity in the Arabidopsis genome.</title>
        <authorList>
            <person name="Yamada K."/>
            <person name="Lim J."/>
            <person name="Dale J.M."/>
            <person name="Chen H."/>
            <person name="Shinn P."/>
            <person name="Palm C.J."/>
            <person name="Southwick A.M."/>
            <person name="Wu H.C."/>
            <person name="Kim C.J."/>
            <person name="Nguyen M."/>
            <person name="Pham P.K."/>
            <person name="Cheuk R.F."/>
            <person name="Karlin-Newmann G."/>
            <person name="Liu S.X."/>
            <person name="Lam B."/>
            <person name="Sakano H."/>
            <person name="Wu T."/>
            <person name="Yu G."/>
            <person name="Miranda M."/>
            <person name="Quach H.L."/>
            <person name="Tripp M."/>
            <person name="Chang C.H."/>
            <person name="Lee J.M."/>
            <person name="Toriumi M.J."/>
            <person name="Chan M.M."/>
            <person name="Tang C.C."/>
            <person name="Onodera C.S."/>
            <person name="Deng J.M."/>
            <person name="Akiyama K."/>
            <person name="Ansari Y."/>
            <person name="Arakawa T."/>
            <person name="Banh J."/>
            <person name="Banno F."/>
            <person name="Bowser L."/>
            <person name="Brooks S.Y."/>
            <person name="Carninci P."/>
            <person name="Chao Q."/>
            <person name="Choy N."/>
            <person name="Enju A."/>
            <person name="Goldsmith A.D."/>
            <person name="Gurjal M."/>
            <person name="Hansen N.F."/>
            <person name="Hayashizaki Y."/>
            <person name="Johnson-Hopson C."/>
            <person name="Hsuan V.W."/>
            <person name="Iida K."/>
            <person name="Karnes M."/>
            <person name="Khan S."/>
            <person name="Koesema E."/>
            <person name="Ishida J."/>
            <person name="Jiang P.X."/>
            <person name="Jones T."/>
            <person name="Kawai J."/>
            <person name="Kamiya A."/>
            <person name="Meyers C."/>
            <person name="Nakajima M."/>
            <person name="Narusaka M."/>
            <person name="Seki M."/>
            <person name="Sakurai T."/>
            <person name="Satou M."/>
            <person name="Tamse R."/>
            <person name="Vaysberg M."/>
            <person name="Wallender E.K."/>
            <person name="Wong C."/>
            <person name="Yamamura Y."/>
            <person name="Yuan S."/>
            <person name="Shinozaki K."/>
            <person name="Davis R.W."/>
            <person name="Theologis A."/>
            <person name="Ecker J.R."/>
        </authorList>
    </citation>
    <scope>NUCLEOTIDE SEQUENCE [LARGE SCALE MRNA]</scope>
    <source>
        <strain>cv. Columbia</strain>
    </source>
</reference>
<reference key="5">
    <citation type="journal article" date="2009" name="Plant Physiol.">
        <title>Large-scale Arabidopsis phosphoproteome profiling reveals novel chloroplast kinase substrates and phosphorylation networks.</title>
        <authorList>
            <person name="Reiland S."/>
            <person name="Messerli G."/>
            <person name="Baerenfaller K."/>
            <person name="Gerrits B."/>
            <person name="Endler A."/>
            <person name="Grossmann J."/>
            <person name="Gruissem W."/>
            <person name="Baginsky S."/>
        </authorList>
    </citation>
    <scope>IDENTIFICATION BY MASS SPECTROMETRY [LARGE SCALE ANALYSIS]</scope>
</reference>
<reference key="6">
    <citation type="journal article" date="2014" name="Mol. Plant">
        <title>Splicing of receptor-like kinase-encoding SNC4 and CERK1 is regulated by two conserved splicing factors that are required for plant immunity.</title>
        <authorList>
            <person name="Zhang Z."/>
            <person name="Liu Y."/>
            <person name="Ding P."/>
            <person name="Li Y."/>
            <person name="Kong Q."/>
            <person name="Zhang Y."/>
        </authorList>
    </citation>
    <scope>FUNCTION</scope>
</reference>
<reference key="7">
    <citation type="journal article" date="2017" name="Proc. Natl. Acad. Sci. U.S.A.">
        <title>SPF45-related splicing factor for phytochrome signaling promotes photomorphogenesis by regulating pre-mRNA splicing in Arabidopsis.</title>
        <authorList>
            <person name="Xin R."/>
            <person name="Zhu L."/>
            <person name="Salome P.A."/>
            <person name="Mancini E."/>
            <person name="Marshall C.M."/>
            <person name="Harmon F.G."/>
            <person name="Yanovsky M.J."/>
            <person name="Weigel D."/>
            <person name="Huq E."/>
        </authorList>
    </citation>
    <scope>FUNCTION</scope>
    <scope>DISRUPTION PHENOTYPE</scope>
    <scope>INTERACTION WITH PHYB</scope>
    <scope>SUBCELLULAR LOCATION</scope>
    <source>
        <strain>cv. Columbia</strain>
    </source>
</reference>
<reference key="8">
    <citation type="journal article" date="2020" name="Plant Physiol.">
        <title>DRT111/SFPS splicing factor controls abscisic acid sensitivity during seed development and germination.</title>
        <authorList>
            <person name="Punzo P."/>
            <person name="Ruggiero A."/>
            <person name="Possenti M."/>
            <person name="Perrella G."/>
            <person name="Nurcato R."/>
            <person name="Costa A."/>
            <person name="Morelli G."/>
            <person name="Grillo S."/>
            <person name="Batelli G."/>
        </authorList>
    </citation>
    <scope>FUNCTION</scope>
    <scope>DISRUPTION PHENOTYPE</scope>
    <scope>TISSUE SPECIFICITY</scope>
    <scope>INDUCTION BY POLYETHYLENE GLYCOL; SALT AND ABSCISIC ACID</scope>
    <scope>SUBCELLULAR LOCATION</scope>
    <scope>INTERACTION WITH SF1</scope>
    <source>
        <strain>cv. Columbia</strain>
    </source>
</reference>
<reference key="9">
    <citation type="journal article" date="2022" name="Proc. Natl. Acad. Sci. U.S.A.">
        <title>SWAP1-SFPS-RRC1 splicing factor complex modulates pre-mRNA splicing to promote photomorphogenesis in Arabidopsis.</title>
        <authorList>
            <person name="Kathare P.K."/>
            <person name="Xin R."/>
            <person name="Ganesan A.S."/>
            <person name="June V.M."/>
            <person name="Reddy A.S.N."/>
            <person name="Huq E."/>
        </authorList>
    </citation>
    <scope>FUNCTION</scope>
    <scope>DISRUPTION PHENOTYPE</scope>
    <scope>SUBUNIT</scope>
    <scope>INTERACTION WITH SWAP1</scope>
    <scope>SUBCELLULAR LOCATION</scope>
    <source>
        <strain>cv. Columbia</strain>
    </source>
</reference>
<sequence length="387" mass="42318">MLGGLYGDLPPPTDDEKPSGNSSSVWSSSTKMAPPTLRKPPAFAPPQTILRPLNKPKPIVSAPYKPPPPSNSSQSVLIPANESAPSHQPALVGVTSSVIEEYDPARPNDYEEYKREKKRKATEAEMKREMDKRRQEDEERDKREREEREKERERDNSDPSRLNISGEEAWKRRAAMSGGGSGGKGRSSSPPGNVDGFSIGKSETSGLGVGAGGQMTAAQRMMAKMGWKQGQGLGKSEQGITTPLMAKKTDRRAGVIVNASENKSSSAEKKVVKSVNINGEPTRVLLLRNMVGPGQVDDELEDEVGGECGKYGTVTRVLIFEITEPNFPVHEAVRIFVQFSRPEETTKALVDLDGRYFGGRTVRATFYDEEKFSKNELAPVPGEIPGY</sequence>
<dbReference type="EMBL" id="M98455">
    <property type="protein sequence ID" value="AAA73382.1"/>
    <property type="molecule type" value="mRNA"/>
</dbReference>
<dbReference type="EMBL" id="AC009917">
    <property type="protein sequence ID" value="AAF19751.1"/>
    <property type="molecule type" value="Genomic_DNA"/>
</dbReference>
<dbReference type="EMBL" id="CP002684">
    <property type="protein sequence ID" value="AEE31231.1"/>
    <property type="molecule type" value="Genomic_DNA"/>
</dbReference>
<dbReference type="EMBL" id="AY045859">
    <property type="protein sequence ID" value="AAK76533.1"/>
    <property type="molecule type" value="mRNA"/>
</dbReference>
<dbReference type="EMBL" id="AY091399">
    <property type="protein sequence ID" value="AAM14338.1"/>
    <property type="molecule type" value="mRNA"/>
</dbReference>
<dbReference type="PIR" id="G86429">
    <property type="entry name" value="G86429"/>
</dbReference>
<dbReference type="PIR" id="S33706">
    <property type="entry name" value="S33706"/>
</dbReference>
<dbReference type="RefSeq" id="NP_174336.1">
    <property type="nucleotide sequence ID" value="NM_102784.3"/>
</dbReference>
<dbReference type="SMR" id="P42698"/>
<dbReference type="BioGRID" id="25162">
    <property type="interactions" value="6"/>
</dbReference>
<dbReference type="FunCoup" id="P42698">
    <property type="interactions" value="1232"/>
</dbReference>
<dbReference type="IntAct" id="P42698">
    <property type="interactions" value="1"/>
</dbReference>
<dbReference type="STRING" id="3702.P42698"/>
<dbReference type="iPTMnet" id="P42698"/>
<dbReference type="PaxDb" id="3702-AT1G30480.1"/>
<dbReference type="ProteomicsDB" id="241256"/>
<dbReference type="EnsemblPlants" id="AT1G30480.1">
    <property type="protein sequence ID" value="AT1G30480.1"/>
    <property type="gene ID" value="AT1G30480"/>
</dbReference>
<dbReference type="GeneID" id="839927"/>
<dbReference type="Gramene" id="AT1G30480.1">
    <property type="protein sequence ID" value="AT1G30480.1"/>
    <property type="gene ID" value="AT1G30480"/>
</dbReference>
<dbReference type="KEGG" id="ath:AT1G30480"/>
<dbReference type="Araport" id="AT1G30480"/>
<dbReference type="TAIR" id="AT1G30480">
    <property type="gene designation" value="DRT111"/>
</dbReference>
<dbReference type="eggNOG" id="KOG1996">
    <property type="taxonomic scope" value="Eukaryota"/>
</dbReference>
<dbReference type="HOGENOM" id="CLU_044888_1_0_1"/>
<dbReference type="InParanoid" id="P42698"/>
<dbReference type="OMA" id="HACFYDE"/>
<dbReference type="OrthoDB" id="5411533at2759"/>
<dbReference type="PhylomeDB" id="P42698"/>
<dbReference type="PRO" id="PR:P42698"/>
<dbReference type="Proteomes" id="UP000006548">
    <property type="component" value="Chromosome 1"/>
</dbReference>
<dbReference type="ExpressionAtlas" id="P42698">
    <property type="expression patterns" value="baseline and differential"/>
</dbReference>
<dbReference type="GO" id="GO:0009507">
    <property type="term" value="C:chloroplast"/>
    <property type="evidence" value="ECO:0000250"/>
    <property type="project" value="TAIR"/>
</dbReference>
<dbReference type="GO" id="GO:0005737">
    <property type="term" value="C:cytoplasm"/>
    <property type="evidence" value="ECO:0007005"/>
    <property type="project" value="TAIR"/>
</dbReference>
<dbReference type="GO" id="GO:0016607">
    <property type="term" value="C:nuclear speck"/>
    <property type="evidence" value="ECO:0000314"/>
    <property type="project" value="UniProtKB"/>
</dbReference>
<dbReference type="GO" id="GO:0005634">
    <property type="term" value="C:nucleus"/>
    <property type="evidence" value="ECO:0000314"/>
    <property type="project" value="UniProtKB"/>
</dbReference>
<dbReference type="GO" id="GO:0003723">
    <property type="term" value="F:RNA binding"/>
    <property type="evidence" value="ECO:0007669"/>
    <property type="project" value="UniProtKB-KW"/>
</dbReference>
<dbReference type="GO" id="GO:0009738">
    <property type="term" value="P:abscisic acid-activated signaling pathway"/>
    <property type="evidence" value="ECO:0007669"/>
    <property type="project" value="UniProtKB-KW"/>
</dbReference>
<dbReference type="GO" id="GO:0006281">
    <property type="term" value="P:DNA repair"/>
    <property type="evidence" value="ECO:0007669"/>
    <property type="project" value="UniProtKB-KW"/>
</dbReference>
<dbReference type="GO" id="GO:0045292">
    <property type="term" value="P:mRNA cis splicing, via spliceosome"/>
    <property type="evidence" value="ECO:0007669"/>
    <property type="project" value="InterPro"/>
</dbReference>
<dbReference type="GO" id="GO:0010017">
    <property type="term" value="P:red or far-red light signaling pathway"/>
    <property type="evidence" value="ECO:0000315"/>
    <property type="project" value="UniProtKB"/>
</dbReference>
<dbReference type="GO" id="GO:0010099">
    <property type="term" value="P:regulation of photomorphogenesis"/>
    <property type="evidence" value="ECO:0000315"/>
    <property type="project" value="UniProtKB"/>
</dbReference>
<dbReference type="GO" id="GO:2000028">
    <property type="term" value="P:regulation of photoperiodism, flowering"/>
    <property type="evidence" value="ECO:0000315"/>
    <property type="project" value="UniProtKB"/>
</dbReference>
<dbReference type="GO" id="GO:0043484">
    <property type="term" value="P:regulation of RNA splicing"/>
    <property type="evidence" value="ECO:0000315"/>
    <property type="project" value="UniProtKB"/>
</dbReference>
<dbReference type="GO" id="GO:0080050">
    <property type="term" value="P:regulation of seed development"/>
    <property type="evidence" value="ECO:0000315"/>
    <property type="project" value="UniProtKB"/>
</dbReference>
<dbReference type="GO" id="GO:2000033">
    <property type="term" value="P:regulation of seed dormancy process"/>
    <property type="evidence" value="ECO:0000315"/>
    <property type="project" value="UniProtKB"/>
</dbReference>
<dbReference type="GO" id="GO:0010029">
    <property type="term" value="P:regulation of seed germination"/>
    <property type="evidence" value="ECO:0000315"/>
    <property type="project" value="UniProtKB"/>
</dbReference>
<dbReference type="GO" id="GO:0010119">
    <property type="term" value="P:regulation of stomatal movement"/>
    <property type="evidence" value="ECO:0000315"/>
    <property type="project" value="UniProtKB"/>
</dbReference>
<dbReference type="GO" id="GO:0009737">
    <property type="term" value="P:response to abscisic acid"/>
    <property type="evidence" value="ECO:0000315"/>
    <property type="project" value="UniProtKB"/>
</dbReference>
<dbReference type="GO" id="GO:0009637">
    <property type="term" value="P:response to blue light"/>
    <property type="evidence" value="ECO:0000315"/>
    <property type="project" value="UniProtKB"/>
</dbReference>
<dbReference type="GO" id="GO:0010218">
    <property type="term" value="P:response to far red light"/>
    <property type="evidence" value="ECO:0000315"/>
    <property type="project" value="UniProtKB"/>
</dbReference>
<dbReference type="GO" id="GO:0009416">
    <property type="term" value="P:response to light stimulus"/>
    <property type="evidence" value="ECO:0000314"/>
    <property type="project" value="UniProtKB"/>
</dbReference>
<dbReference type="GO" id="GO:0006970">
    <property type="term" value="P:response to osmotic stress"/>
    <property type="evidence" value="ECO:0000270"/>
    <property type="project" value="UniProtKB"/>
</dbReference>
<dbReference type="GO" id="GO:0010114">
    <property type="term" value="P:response to red light"/>
    <property type="evidence" value="ECO:0000315"/>
    <property type="project" value="UniProtKB"/>
</dbReference>
<dbReference type="GO" id="GO:0009651">
    <property type="term" value="P:response to salt stress"/>
    <property type="evidence" value="ECO:0000270"/>
    <property type="project" value="UniProtKB"/>
</dbReference>
<dbReference type="GO" id="GO:0006396">
    <property type="term" value="P:RNA processing"/>
    <property type="evidence" value="ECO:0000315"/>
    <property type="project" value="UniProtKB"/>
</dbReference>
<dbReference type="CDD" id="cd12647">
    <property type="entry name" value="RRM_UHM_SPF45"/>
    <property type="match status" value="1"/>
</dbReference>
<dbReference type="FunFam" id="3.30.70.330:FF:000079">
    <property type="entry name" value="Putative splicing factor 45"/>
    <property type="match status" value="1"/>
</dbReference>
<dbReference type="Gene3D" id="3.30.70.330">
    <property type="match status" value="1"/>
</dbReference>
<dbReference type="InterPro" id="IPR000467">
    <property type="entry name" value="G_patch_dom"/>
</dbReference>
<dbReference type="InterPro" id="IPR012677">
    <property type="entry name" value="Nucleotide-bd_a/b_plait_sf"/>
</dbReference>
<dbReference type="InterPro" id="IPR035979">
    <property type="entry name" value="RBD_domain_sf"/>
</dbReference>
<dbReference type="InterPro" id="IPR040052">
    <property type="entry name" value="RBM17"/>
</dbReference>
<dbReference type="InterPro" id="IPR000504">
    <property type="entry name" value="RRM_dom"/>
</dbReference>
<dbReference type="InterPro" id="IPR003954">
    <property type="entry name" value="RRM_dom_euk"/>
</dbReference>
<dbReference type="InterPro" id="IPR034653">
    <property type="entry name" value="SPF45_RRM"/>
</dbReference>
<dbReference type="PANTHER" id="PTHR13288:SF8">
    <property type="entry name" value="SPLICING FACTOR 45"/>
    <property type="match status" value="1"/>
</dbReference>
<dbReference type="PANTHER" id="PTHR13288">
    <property type="entry name" value="SPLICING FACTOR 45 SPF45"/>
    <property type="match status" value="1"/>
</dbReference>
<dbReference type="Pfam" id="PF01585">
    <property type="entry name" value="G-patch"/>
    <property type="match status" value="1"/>
</dbReference>
<dbReference type="PIRSF" id="PIRSF031066">
    <property type="entry name" value="Splicing_factor_SPF45"/>
    <property type="match status" value="1"/>
</dbReference>
<dbReference type="SMART" id="SM00443">
    <property type="entry name" value="G_patch"/>
    <property type="match status" value="1"/>
</dbReference>
<dbReference type="SMART" id="SM00361">
    <property type="entry name" value="RRM_1"/>
    <property type="match status" value="1"/>
</dbReference>
<dbReference type="SUPFAM" id="SSF54928">
    <property type="entry name" value="RNA-binding domain, RBD"/>
    <property type="match status" value="1"/>
</dbReference>
<dbReference type="PROSITE" id="PS50174">
    <property type="entry name" value="G_PATCH"/>
    <property type="match status" value="1"/>
</dbReference>
<dbReference type="PROSITE" id="PS50102">
    <property type="entry name" value="RRM"/>
    <property type="match status" value="1"/>
</dbReference>
<feature type="chain" id="PRO_0000031017" description="DNA-damage-repair/toleration protein 111">
    <location>
        <begin position="1"/>
        <end position="387"/>
    </location>
</feature>
<feature type="domain" description="G-patch" evidence="1">
    <location>
        <begin position="214"/>
        <end position="260"/>
    </location>
</feature>
<feature type="domain" description="RRM" evidence="2">
    <location>
        <begin position="283"/>
        <end position="369"/>
    </location>
</feature>
<feature type="region of interest" description="Disordered" evidence="3">
    <location>
        <begin position="1"/>
        <end position="213"/>
    </location>
</feature>
<feature type="compositionally biased region" description="Low complexity" evidence="3">
    <location>
        <begin position="19"/>
        <end position="29"/>
    </location>
</feature>
<feature type="compositionally biased region" description="Basic and acidic residues" evidence="3">
    <location>
        <begin position="103"/>
        <end position="158"/>
    </location>
</feature>
<feature type="sequence conflict" description="In Ref. 1; AAA73382." evidence="14" ref="1">
    <original>S</original>
    <variation>R</variation>
    <location>
        <position position="28"/>
    </location>
</feature>
<feature type="sequence conflict" description="In Ref. 1; AAA73382." evidence="14" ref="1">
    <location>
        <begin position="69"/>
        <end position="70"/>
    </location>
</feature>
<feature type="sequence conflict" description="In Ref. 1; AAA73382." evidence="14" ref="1">
    <original>EDE</original>
    <variation>VYP</variation>
    <location>
        <begin position="136"/>
        <end position="138"/>
    </location>
</feature>
<feature type="sequence conflict" description="In Ref. 1; AAA73382." evidence="14" ref="1">
    <original>K</original>
    <variation>M</variation>
    <location>
        <position position="142"/>
    </location>
</feature>
<feature type="sequence conflict" description="In Ref. 1; AAA73382." evidence="14" ref="1">
    <original>KE</original>
    <variation>R</variation>
    <location>
        <begin position="150"/>
        <end position="151"/>
    </location>
</feature>
<feature type="sequence conflict" description="In Ref. 1; AAA73382." evidence="14" ref="1">
    <original>DNSDPSRLN</original>
    <variation>EITVILSVD</variation>
    <location>
        <begin position="155"/>
        <end position="163"/>
    </location>
</feature>
<feature type="sequence conflict" description="In Ref. 1; AAA73382." evidence="14" ref="1">
    <original>AWKRRAAMSGGGSGGKGRSSSP</original>
    <variation>RGRDPARVVVEVLGREDPRLL</variation>
    <location>
        <begin position="169"/>
        <end position="190"/>
    </location>
</feature>
<feature type="sequence conflict" description="In Ref. 1; AAA73382." evidence="14" ref="1">
    <original>ET</original>
    <variation>KP</variation>
    <location>
        <begin position="203"/>
        <end position="204"/>
    </location>
</feature>
<feature type="sequence conflict" description="In Ref. 1; AAA73382." evidence="14" ref="1">
    <original>A</original>
    <variation>P</variation>
    <location>
        <position position="217"/>
    </location>
</feature>
<feature type="sequence conflict" description="In Ref. 1; AAA73382." evidence="14" ref="1">
    <original>A</original>
    <variation>P</variation>
    <location>
        <position position="223"/>
    </location>
</feature>
<feature type="sequence conflict" description="In Ref. 1; AAA73382." evidence="14" ref="1">
    <original>T</original>
    <variation>P</variation>
    <location>
        <position position="241"/>
    </location>
</feature>
<feature type="sequence conflict" description="In Ref. 1; AAA73382." evidence="14" ref="1">
    <original>G</original>
    <variation>A</variation>
    <location>
        <position position="309"/>
    </location>
</feature>
<name>DR111_ARATH</name>